<gene>
    <name evidence="1" type="primary">metK</name>
    <name type="ordered locus">tll0978</name>
</gene>
<reference key="1">
    <citation type="journal article" date="2002" name="DNA Res.">
        <title>Complete genome structure of the thermophilic cyanobacterium Thermosynechococcus elongatus BP-1.</title>
        <authorList>
            <person name="Nakamura Y."/>
            <person name="Kaneko T."/>
            <person name="Sato S."/>
            <person name="Ikeuchi M."/>
            <person name="Katoh H."/>
            <person name="Sasamoto S."/>
            <person name="Watanabe A."/>
            <person name="Iriguchi M."/>
            <person name="Kawashima K."/>
            <person name="Kimura T."/>
            <person name="Kishida Y."/>
            <person name="Kiyokawa C."/>
            <person name="Kohara M."/>
            <person name="Matsumoto M."/>
            <person name="Matsuno A."/>
            <person name="Nakazaki N."/>
            <person name="Shimpo S."/>
            <person name="Sugimoto M."/>
            <person name="Takeuchi C."/>
            <person name="Yamada M."/>
            <person name="Tabata S."/>
        </authorList>
    </citation>
    <scope>NUCLEOTIDE SEQUENCE [LARGE SCALE GENOMIC DNA]</scope>
    <source>
        <strain>NIES-2133 / IAM M-273 / BP-1</strain>
    </source>
</reference>
<name>METK_THEVB</name>
<keyword id="KW-0067">ATP-binding</keyword>
<keyword id="KW-0963">Cytoplasm</keyword>
<keyword id="KW-0460">Magnesium</keyword>
<keyword id="KW-0479">Metal-binding</keyword>
<keyword id="KW-0547">Nucleotide-binding</keyword>
<keyword id="KW-0554">One-carbon metabolism</keyword>
<keyword id="KW-0630">Potassium</keyword>
<keyword id="KW-1185">Reference proteome</keyword>
<keyword id="KW-0808">Transferase</keyword>
<organism>
    <name type="scientific">Thermosynechococcus vestitus (strain NIES-2133 / IAM M-273 / BP-1)</name>
    <dbReference type="NCBI Taxonomy" id="197221"/>
    <lineage>
        <taxon>Bacteria</taxon>
        <taxon>Bacillati</taxon>
        <taxon>Cyanobacteriota</taxon>
        <taxon>Cyanophyceae</taxon>
        <taxon>Acaryochloridales</taxon>
        <taxon>Thermosynechococcaceae</taxon>
        <taxon>Thermosynechococcus</taxon>
    </lineage>
</organism>
<dbReference type="EC" id="2.5.1.6" evidence="1"/>
<dbReference type="EMBL" id="BA000039">
    <property type="protein sequence ID" value="BAC08530.1"/>
    <property type="molecule type" value="Genomic_DNA"/>
</dbReference>
<dbReference type="RefSeq" id="NP_681768.1">
    <property type="nucleotide sequence ID" value="NC_004113.1"/>
</dbReference>
<dbReference type="RefSeq" id="WP_011056822.1">
    <property type="nucleotide sequence ID" value="NC_004113.1"/>
</dbReference>
<dbReference type="SMR" id="Q8DK88"/>
<dbReference type="STRING" id="197221.gene:10747570"/>
<dbReference type="EnsemblBacteria" id="BAC08530">
    <property type="protein sequence ID" value="BAC08530"/>
    <property type="gene ID" value="BAC08530"/>
</dbReference>
<dbReference type="KEGG" id="tel:tll0978"/>
<dbReference type="PATRIC" id="fig|197221.4.peg.1028"/>
<dbReference type="eggNOG" id="COG0192">
    <property type="taxonomic scope" value="Bacteria"/>
</dbReference>
<dbReference type="UniPathway" id="UPA00315">
    <property type="reaction ID" value="UER00080"/>
</dbReference>
<dbReference type="Proteomes" id="UP000000440">
    <property type="component" value="Chromosome"/>
</dbReference>
<dbReference type="GO" id="GO:0005737">
    <property type="term" value="C:cytoplasm"/>
    <property type="evidence" value="ECO:0007669"/>
    <property type="project" value="UniProtKB-SubCell"/>
</dbReference>
<dbReference type="GO" id="GO:0005524">
    <property type="term" value="F:ATP binding"/>
    <property type="evidence" value="ECO:0007669"/>
    <property type="project" value="UniProtKB-UniRule"/>
</dbReference>
<dbReference type="GO" id="GO:0000287">
    <property type="term" value="F:magnesium ion binding"/>
    <property type="evidence" value="ECO:0007669"/>
    <property type="project" value="UniProtKB-UniRule"/>
</dbReference>
<dbReference type="GO" id="GO:0004478">
    <property type="term" value="F:methionine adenosyltransferase activity"/>
    <property type="evidence" value="ECO:0007669"/>
    <property type="project" value="UniProtKB-UniRule"/>
</dbReference>
<dbReference type="GO" id="GO:0006730">
    <property type="term" value="P:one-carbon metabolic process"/>
    <property type="evidence" value="ECO:0007669"/>
    <property type="project" value="UniProtKB-KW"/>
</dbReference>
<dbReference type="GO" id="GO:0006556">
    <property type="term" value="P:S-adenosylmethionine biosynthetic process"/>
    <property type="evidence" value="ECO:0007669"/>
    <property type="project" value="UniProtKB-UniRule"/>
</dbReference>
<dbReference type="CDD" id="cd18079">
    <property type="entry name" value="S-AdoMet_synt"/>
    <property type="match status" value="1"/>
</dbReference>
<dbReference type="FunFam" id="3.30.300.10:FF:000003">
    <property type="entry name" value="S-adenosylmethionine synthase"/>
    <property type="match status" value="1"/>
</dbReference>
<dbReference type="Gene3D" id="3.30.300.10">
    <property type="match status" value="3"/>
</dbReference>
<dbReference type="HAMAP" id="MF_00086">
    <property type="entry name" value="S_AdoMet_synth1"/>
    <property type="match status" value="1"/>
</dbReference>
<dbReference type="InterPro" id="IPR022631">
    <property type="entry name" value="ADOMET_SYNTHASE_CS"/>
</dbReference>
<dbReference type="InterPro" id="IPR022630">
    <property type="entry name" value="S-AdoMet_synt_C"/>
</dbReference>
<dbReference type="InterPro" id="IPR022629">
    <property type="entry name" value="S-AdoMet_synt_central"/>
</dbReference>
<dbReference type="InterPro" id="IPR022628">
    <property type="entry name" value="S-AdoMet_synt_N"/>
</dbReference>
<dbReference type="InterPro" id="IPR002133">
    <property type="entry name" value="S-AdoMet_synthetase"/>
</dbReference>
<dbReference type="InterPro" id="IPR022636">
    <property type="entry name" value="S-AdoMet_synthetase_sfam"/>
</dbReference>
<dbReference type="NCBIfam" id="TIGR01034">
    <property type="entry name" value="metK"/>
    <property type="match status" value="1"/>
</dbReference>
<dbReference type="PANTHER" id="PTHR11964">
    <property type="entry name" value="S-ADENOSYLMETHIONINE SYNTHETASE"/>
    <property type="match status" value="1"/>
</dbReference>
<dbReference type="Pfam" id="PF02773">
    <property type="entry name" value="S-AdoMet_synt_C"/>
    <property type="match status" value="1"/>
</dbReference>
<dbReference type="Pfam" id="PF02772">
    <property type="entry name" value="S-AdoMet_synt_M"/>
    <property type="match status" value="1"/>
</dbReference>
<dbReference type="Pfam" id="PF00438">
    <property type="entry name" value="S-AdoMet_synt_N"/>
    <property type="match status" value="1"/>
</dbReference>
<dbReference type="PIRSF" id="PIRSF000497">
    <property type="entry name" value="MAT"/>
    <property type="match status" value="1"/>
</dbReference>
<dbReference type="SUPFAM" id="SSF55973">
    <property type="entry name" value="S-adenosylmethionine synthetase"/>
    <property type="match status" value="3"/>
</dbReference>
<dbReference type="PROSITE" id="PS00376">
    <property type="entry name" value="ADOMET_SYNTHASE_1"/>
    <property type="match status" value="1"/>
</dbReference>
<dbReference type="PROSITE" id="PS00377">
    <property type="entry name" value="ADOMET_SYNTHASE_2"/>
    <property type="match status" value="1"/>
</dbReference>
<protein>
    <recommendedName>
        <fullName evidence="1">S-adenosylmethionine synthase</fullName>
        <shortName evidence="1">AdoMet synthase</shortName>
        <ecNumber evidence="1">2.5.1.6</ecNumber>
    </recommendedName>
    <alternativeName>
        <fullName evidence="1">MAT</fullName>
    </alternativeName>
    <alternativeName>
        <fullName evidence="1">Methionine adenosyltransferase</fullName>
    </alternativeName>
</protein>
<evidence type="ECO:0000255" key="1">
    <source>
        <dbReference type="HAMAP-Rule" id="MF_00086"/>
    </source>
</evidence>
<sequence length="416" mass="45083">MRYLFSSESVTEGHPDKICDQIADAILDALLTQDPQSRVAAEVVVNTGLVLITGEITTKAQVNYVNLARQKIHEIGYTDANNGFAANSCAVLVALDEQSPDIARGVDTAQEAREQLSDAELDRIGAGDQGIMFGYACNETPEYMPLPISLAHRMARRLAAVRKTGQLPYLRPDGKTQVTVIYEDGKPVGIDTILISTQHTATIDDISEESAVQAKIKADLWEAVVKPVFADLTLQPDGNTRFLVNPTGKFVIGGPQGDSGLTGRKLVVDTYGGYARHGGGAFSGKDPTKVDRSAAYMARYIAKNIVAAGLADKCELQISYAIGVARPMSLFVDTFGTGKLSPEQLLELIKTHFDLRPAAIIQTLNLRHLPQERGGRFYQDVAAYGHFGRHDLDLPWEKLDKVADLQAAAAQFLSAV</sequence>
<comment type="function">
    <text evidence="1">Catalyzes the formation of S-adenosylmethionine (AdoMet) from methionine and ATP. The overall synthetic reaction is composed of two sequential steps, AdoMet formation and the subsequent tripolyphosphate hydrolysis which occurs prior to release of AdoMet from the enzyme.</text>
</comment>
<comment type="catalytic activity">
    <reaction evidence="1">
        <text>L-methionine + ATP + H2O = S-adenosyl-L-methionine + phosphate + diphosphate</text>
        <dbReference type="Rhea" id="RHEA:21080"/>
        <dbReference type="ChEBI" id="CHEBI:15377"/>
        <dbReference type="ChEBI" id="CHEBI:30616"/>
        <dbReference type="ChEBI" id="CHEBI:33019"/>
        <dbReference type="ChEBI" id="CHEBI:43474"/>
        <dbReference type="ChEBI" id="CHEBI:57844"/>
        <dbReference type="ChEBI" id="CHEBI:59789"/>
        <dbReference type="EC" id="2.5.1.6"/>
    </reaction>
</comment>
<comment type="cofactor">
    <cofactor evidence="1">
        <name>Mg(2+)</name>
        <dbReference type="ChEBI" id="CHEBI:18420"/>
    </cofactor>
    <text evidence="1">Binds 2 divalent ions per subunit.</text>
</comment>
<comment type="cofactor">
    <cofactor evidence="1">
        <name>K(+)</name>
        <dbReference type="ChEBI" id="CHEBI:29103"/>
    </cofactor>
    <text evidence="1">Binds 1 potassium ion per subunit.</text>
</comment>
<comment type="pathway">
    <text evidence="1">Amino-acid biosynthesis; S-adenosyl-L-methionine biosynthesis; S-adenosyl-L-methionine from L-methionine: step 1/1.</text>
</comment>
<comment type="subunit">
    <text evidence="1">Homotetramer; dimer of dimers.</text>
</comment>
<comment type="subcellular location">
    <subcellularLocation>
        <location evidence="1">Cytoplasm</location>
    </subcellularLocation>
</comment>
<comment type="similarity">
    <text evidence="1">Belongs to the AdoMet synthase family.</text>
</comment>
<accession>Q8DK88</accession>
<proteinExistence type="inferred from homology"/>
<feature type="chain" id="PRO_0000174609" description="S-adenosylmethionine synthase">
    <location>
        <begin position="1"/>
        <end position="416"/>
    </location>
</feature>
<feature type="region of interest" description="Flexible loop" evidence="1">
    <location>
        <begin position="98"/>
        <end position="108"/>
    </location>
</feature>
<feature type="binding site" description="in other chain" evidence="1">
    <location>
        <position position="14"/>
    </location>
    <ligand>
        <name>ATP</name>
        <dbReference type="ChEBI" id="CHEBI:30616"/>
        <note>ligand shared between two neighboring subunits</note>
    </ligand>
</feature>
<feature type="binding site" evidence="1">
    <location>
        <position position="16"/>
    </location>
    <ligand>
        <name>Mg(2+)</name>
        <dbReference type="ChEBI" id="CHEBI:18420"/>
    </ligand>
</feature>
<feature type="binding site" evidence="1">
    <location>
        <position position="42"/>
    </location>
    <ligand>
        <name>K(+)</name>
        <dbReference type="ChEBI" id="CHEBI:29103"/>
    </ligand>
</feature>
<feature type="binding site" description="in other chain" evidence="1">
    <location>
        <position position="55"/>
    </location>
    <ligand>
        <name>L-methionine</name>
        <dbReference type="ChEBI" id="CHEBI:57844"/>
        <note>ligand shared between two neighboring subunits</note>
    </ligand>
</feature>
<feature type="binding site" description="in other chain" evidence="1">
    <location>
        <position position="98"/>
    </location>
    <ligand>
        <name>L-methionine</name>
        <dbReference type="ChEBI" id="CHEBI:57844"/>
        <note>ligand shared between two neighboring subunits</note>
    </ligand>
</feature>
<feature type="binding site" description="in other chain" evidence="1">
    <location>
        <begin position="173"/>
        <end position="175"/>
    </location>
    <ligand>
        <name>ATP</name>
        <dbReference type="ChEBI" id="CHEBI:30616"/>
        <note>ligand shared between two neighboring subunits</note>
    </ligand>
</feature>
<feature type="binding site" description="in other chain" evidence="1">
    <location>
        <begin position="249"/>
        <end position="250"/>
    </location>
    <ligand>
        <name>ATP</name>
        <dbReference type="ChEBI" id="CHEBI:30616"/>
        <note>ligand shared between two neighboring subunits</note>
    </ligand>
</feature>
<feature type="binding site" evidence="1">
    <location>
        <position position="258"/>
    </location>
    <ligand>
        <name>ATP</name>
        <dbReference type="ChEBI" id="CHEBI:30616"/>
        <note>ligand shared between two neighboring subunits</note>
    </ligand>
</feature>
<feature type="binding site" evidence="1">
    <location>
        <position position="258"/>
    </location>
    <ligand>
        <name>L-methionine</name>
        <dbReference type="ChEBI" id="CHEBI:57844"/>
        <note>ligand shared between two neighboring subunits</note>
    </ligand>
</feature>
<feature type="binding site" description="in other chain" evidence="1">
    <location>
        <begin position="264"/>
        <end position="265"/>
    </location>
    <ligand>
        <name>ATP</name>
        <dbReference type="ChEBI" id="CHEBI:30616"/>
        <note>ligand shared between two neighboring subunits</note>
    </ligand>
</feature>
<feature type="binding site" evidence="1">
    <location>
        <position position="281"/>
    </location>
    <ligand>
        <name>ATP</name>
        <dbReference type="ChEBI" id="CHEBI:30616"/>
        <note>ligand shared between two neighboring subunits</note>
    </ligand>
</feature>
<feature type="binding site" evidence="1">
    <location>
        <position position="285"/>
    </location>
    <ligand>
        <name>ATP</name>
        <dbReference type="ChEBI" id="CHEBI:30616"/>
        <note>ligand shared between two neighboring subunits</note>
    </ligand>
</feature>
<feature type="binding site" description="in other chain" evidence="1">
    <location>
        <position position="289"/>
    </location>
    <ligand>
        <name>L-methionine</name>
        <dbReference type="ChEBI" id="CHEBI:57844"/>
        <note>ligand shared between two neighboring subunits</note>
    </ligand>
</feature>